<sequence>MEELIVELRLFLELLDHEYLTSTVREKKAVLTNILLRLQSSKGFEVKDHAQKAEANNLPAPPQMPLPEIPQPWLPPDSGPPPLPTSSLPEGYYEEAVPLSPGKAPEYITSNYDSDAMSSSYESYDEEEEDGKGKKTRHQWPSEEASMDLVKDAKICAFLLRKKRFGQWTKLLCVIKDTKLLCYKSSKDQQPQMELPLQGCSITYIPRDSKKKKHELKITQQGTDPLVLAVQSKEQAEQWLKVIKEAYSGCSGPVDPECSPPPSTSAPVNKAELEKKLSSERPSSDGEGGVENGVTTCNGKEQAKRKKPSKSEAKGTVSKVTGKKITKIIGLGKKKPSTDEQTSSAEEDVPTCGYLNVLSNSRWRERWCRVKDSKLILHKDRADLKTHLVSIPLRGCEVIPGLDSKHPLTFRLLRNGQEVAVLEASSSEDMGRWIGILLAETGSSTDPGALHYDYIDVEMSANVIQTAKQTFCFMNRRAVSTSPYLGSLSNGYAHPSGTALHYDDVPCVNGSLKNKKPPASSNGVPVKGKAPSSQQKKVETAGGVKRTASNAEQYKYGKNRVEADAKRLQSKEEELLKRKEALRNRLAQLRKERKDLRAAIEVNAGRKTQAALEDKLKRLEEECKQREAERVSLELELTEVKESLKKALAGGVTLGLAIEPRSGTSSPQSPVFRHRTLENSPISSCDTSDAEGPLPVNSAAVLKKSQPSSGSSPCRGHVLQKAKEWELKNGT</sequence>
<evidence type="ECO:0000250" key="1"/>
<evidence type="ECO:0000250" key="2">
    <source>
        <dbReference type="UniProtKB" id="Q8N556"/>
    </source>
</evidence>
<evidence type="ECO:0000255" key="3"/>
<evidence type="ECO:0000255" key="4">
    <source>
        <dbReference type="PROSITE-ProRule" id="PRU00145"/>
    </source>
</evidence>
<evidence type="ECO:0000256" key="5">
    <source>
        <dbReference type="SAM" id="MobiDB-lite"/>
    </source>
</evidence>
<evidence type="ECO:0000305" key="6"/>
<evidence type="ECO:0007744" key="7">
    <source>
    </source>
</evidence>
<evidence type="ECO:0007744" key="8">
    <source>
    </source>
</evidence>
<name>AFAP1_MOUSE</name>
<proteinExistence type="evidence at protein level"/>
<dbReference type="EMBL" id="AK129483">
    <property type="protein sequence ID" value="BAC98293.1"/>
    <property type="status" value="ALT_INIT"/>
    <property type="molecule type" value="mRNA"/>
</dbReference>
<dbReference type="EMBL" id="AK147706">
    <property type="protein sequence ID" value="BAE28086.1"/>
    <property type="molecule type" value="mRNA"/>
</dbReference>
<dbReference type="EMBL" id="AK148000">
    <property type="protein sequence ID" value="BAE28280.1"/>
    <property type="molecule type" value="mRNA"/>
</dbReference>
<dbReference type="EMBL" id="AK161385">
    <property type="protein sequence ID" value="BAE36364.1"/>
    <property type="molecule type" value="mRNA"/>
</dbReference>
<dbReference type="EMBL" id="BC050814">
    <property type="protein sequence ID" value="AAH50814.1"/>
    <property type="molecule type" value="mRNA"/>
</dbReference>
<dbReference type="CCDS" id="CCDS19236.1"/>
<dbReference type="RefSeq" id="NP_081649.1">
    <property type="nucleotide sequence ID" value="NM_027373.3"/>
</dbReference>
<dbReference type="SMR" id="Q80YS6"/>
<dbReference type="BioGRID" id="213967">
    <property type="interactions" value="3"/>
</dbReference>
<dbReference type="FunCoup" id="Q80YS6">
    <property type="interactions" value="279"/>
</dbReference>
<dbReference type="IntAct" id="Q80YS6">
    <property type="interactions" value="1"/>
</dbReference>
<dbReference type="MINT" id="Q80YS6"/>
<dbReference type="STRING" id="10090.ENSMUSP00000067779"/>
<dbReference type="iPTMnet" id="Q80YS6"/>
<dbReference type="PhosphoSitePlus" id="Q80YS6"/>
<dbReference type="jPOST" id="Q80YS6"/>
<dbReference type="PaxDb" id="10090-ENSMUSP00000067779"/>
<dbReference type="PeptideAtlas" id="Q80YS6"/>
<dbReference type="ProteomicsDB" id="285767"/>
<dbReference type="Pumba" id="Q80YS6"/>
<dbReference type="Antibodypedia" id="2882">
    <property type="antibodies" value="517 antibodies from 32 providers"/>
</dbReference>
<dbReference type="DNASU" id="70292"/>
<dbReference type="Ensembl" id="ENSMUST00000064571.11">
    <property type="protein sequence ID" value="ENSMUSP00000067779.5"/>
    <property type="gene ID" value="ENSMUSG00000029094.13"/>
</dbReference>
<dbReference type="GeneID" id="70292"/>
<dbReference type="KEGG" id="mmu:70292"/>
<dbReference type="UCSC" id="uc008xej.1">
    <property type="organism name" value="mouse"/>
</dbReference>
<dbReference type="AGR" id="MGI:1917542"/>
<dbReference type="CTD" id="60312"/>
<dbReference type="MGI" id="MGI:1917542">
    <property type="gene designation" value="Afap1"/>
</dbReference>
<dbReference type="VEuPathDB" id="HostDB:ENSMUSG00000029094"/>
<dbReference type="eggNOG" id="ENOG502QQI1">
    <property type="taxonomic scope" value="Eukaryota"/>
</dbReference>
<dbReference type="GeneTree" id="ENSGT00950000183067"/>
<dbReference type="HOGENOM" id="CLU_014418_2_0_1"/>
<dbReference type="InParanoid" id="Q80YS6"/>
<dbReference type="OMA" id="THMASIP"/>
<dbReference type="OrthoDB" id="5970758at2759"/>
<dbReference type="PhylomeDB" id="Q80YS6"/>
<dbReference type="TreeFam" id="TF332622"/>
<dbReference type="BioGRID-ORCS" id="70292">
    <property type="hits" value="4 hits in 76 CRISPR screens"/>
</dbReference>
<dbReference type="ChiTaRS" id="Afap1">
    <property type="organism name" value="mouse"/>
</dbReference>
<dbReference type="PRO" id="PR:Q80YS6"/>
<dbReference type="Proteomes" id="UP000000589">
    <property type="component" value="Chromosome 5"/>
</dbReference>
<dbReference type="RNAct" id="Q80YS6">
    <property type="molecule type" value="protein"/>
</dbReference>
<dbReference type="Bgee" id="ENSMUSG00000029094">
    <property type="expression patterns" value="Expressed in pineal body and 226 other cell types or tissues"/>
</dbReference>
<dbReference type="ExpressionAtlas" id="Q80YS6">
    <property type="expression patterns" value="baseline and differential"/>
</dbReference>
<dbReference type="GO" id="GO:0005829">
    <property type="term" value="C:cytosol"/>
    <property type="evidence" value="ECO:0007669"/>
    <property type="project" value="Ensembl"/>
</dbReference>
<dbReference type="GO" id="GO:0005925">
    <property type="term" value="C:focal adhesion"/>
    <property type="evidence" value="ECO:0007669"/>
    <property type="project" value="Ensembl"/>
</dbReference>
<dbReference type="GO" id="GO:0001725">
    <property type="term" value="C:stress fiber"/>
    <property type="evidence" value="ECO:0007669"/>
    <property type="project" value="UniProtKB-SubCell"/>
</dbReference>
<dbReference type="GO" id="GO:0003779">
    <property type="term" value="F:actin binding"/>
    <property type="evidence" value="ECO:0007669"/>
    <property type="project" value="UniProtKB-KW"/>
</dbReference>
<dbReference type="GO" id="GO:0017124">
    <property type="term" value="F:SH3 domain binding"/>
    <property type="evidence" value="ECO:0007669"/>
    <property type="project" value="UniProtKB-KW"/>
</dbReference>
<dbReference type="CDD" id="cd13306">
    <property type="entry name" value="PH1_AFAP"/>
    <property type="match status" value="1"/>
</dbReference>
<dbReference type="CDD" id="cd13307">
    <property type="entry name" value="PH2_AFAP"/>
    <property type="match status" value="1"/>
</dbReference>
<dbReference type="FunFam" id="2.30.29.30:FF:000122">
    <property type="entry name" value="Actin filament associated protein 1"/>
    <property type="match status" value="1"/>
</dbReference>
<dbReference type="FunFam" id="2.30.29.30:FF:000020">
    <property type="entry name" value="Actin filament-associated protein 1-like 2 isoform 1"/>
    <property type="match status" value="1"/>
</dbReference>
<dbReference type="Gene3D" id="2.30.29.30">
    <property type="entry name" value="Pleckstrin-homology domain (PH domain)/Phosphotyrosine-binding domain (PTB)"/>
    <property type="match status" value="2"/>
</dbReference>
<dbReference type="InterPro" id="IPR030113">
    <property type="entry name" value="AFAP"/>
</dbReference>
<dbReference type="InterPro" id="IPR011993">
    <property type="entry name" value="PH-like_dom_sf"/>
</dbReference>
<dbReference type="InterPro" id="IPR001849">
    <property type="entry name" value="PH_domain"/>
</dbReference>
<dbReference type="PANTHER" id="PTHR14338:SF8">
    <property type="entry name" value="ACTIN FILAMENT-ASSOCIATED PROTEIN 1"/>
    <property type="match status" value="1"/>
</dbReference>
<dbReference type="PANTHER" id="PTHR14338">
    <property type="entry name" value="ACTIN FILAMENT-ASSOCIATED PROTEIN 1 FAMILY MEMBER"/>
    <property type="match status" value="1"/>
</dbReference>
<dbReference type="Pfam" id="PF00169">
    <property type="entry name" value="PH"/>
    <property type="match status" value="2"/>
</dbReference>
<dbReference type="SMART" id="SM00233">
    <property type="entry name" value="PH"/>
    <property type="match status" value="2"/>
</dbReference>
<dbReference type="SUPFAM" id="SSF50729">
    <property type="entry name" value="PH domain-like"/>
    <property type="match status" value="2"/>
</dbReference>
<dbReference type="PROSITE" id="PS50003">
    <property type="entry name" value="PH_DOMAIN"/>
    <property type="match status" value="2"/>
</dbReference>
<protein>
    <recommendedName>
        <fullName>Actin filament-associated protein 1</fullName>
    </recommendedName>
    <alternativeName>
        <fullName>110 kDa actin filament-associated protein</fullName>
        <shortName>AFAP-110</shortName>
    </alternativeName>
</protein>
<feature type="chain" id="PRO_0000317659" description="Actin filament-associated protein 1">
    <location>
        <begin position="1"/>
        <end position="731"/>
    </location>
</feature>
<feature type="domain" description="PH 1" evidence="4">
    <location>
        <begin position="152"/>
        <end position="248"/>
    </location>
</feature>
<feature type="domain" description="PH 2" evidence="4">
    <location>
        <begin position="348"/>
        <end position="442"/>
    </location>
</feature>
<feature type="region of interest" description="Disordered" evidence="5">
    <location>
        <begin position="56"/>
        <end position="90"/>
    </location>
</feature>
<feature type="region of interest" description="Disordered" evidence="5">
    <location>
        <begin position="118"/>
        <end position="139"/>
    </location>
</feature>
<feature type="region of interest" description="Disordered" evidence="5">
    <location>
        <begin position="252"/>
        <end position="318"/>
    </location>
</feature>
<feature type="region of interest" description="Disordered" evidence="5">
    <location>
        <begin position="513"/>
        <end position="544"/>
    </location>
</feature>
<feature type="region of interest" description="Interaction with F-actin" evidence="1">
    <location>
        <begin position="595"/>
        <end position="638"/>
    </location>
</feature>
<feature type="region of interest" description="Disordered" evidence="5">
    <location>
        <begin position="658"/>
        <end position="731"/>
    </location>
</feature>
<feature type="coiled-coil region" evidence="3">
    <location>
        <begin position="558"/>
        <end position="649"/>
    </location>
</feature>
<feature type="short sequence motif" description="SH3-binding" evidence="1">
    <location>
        <begin position="70"/>
        <end position="73"/>
    </location>
</feature>
<feature type="short sequence motif" description="SH2-binding 1" evidence="1">
    <location>
        <begin position="93"/>
        <end position="96"/>
    </location>
</feature>
<feature type="short sequence motif" description="SH2-binding 2" evidence="1">
    <location>
        <begin position="452"/>
        <end position="457"/>
    </location>
</feature>
<feature type="compositionally biased region" description="Pro residues" evidence="5">
    <location>
        <begin position="59"/>
        <end position="84"/>
    </location>
</feature>
<feature type="compositionally biased region" description="Basic and acidic residues" evidence="5">
    <location>
        <begin position="271"/>
        <end position="284"/>
    </location>
</feature>
<feature type="compositionally biased region" description="Polar residues" evidence="5">
    <location>
        <begin position="678"/>
        <end position="687"/>
    </location>
</feature>
<feature type="compositionally biased region" description="Basic and acidic residues" evidence="5">
    <location>
        <begin position="721"/>
        <end position="731"/>
    </location>
</feature>
<feature type="modified residue" description="N-acetylmethionine" evidence="2">
    <location>
        <position position="1"/>
    </location>
</feature>
<feature type="modified residue" description="Phosphoserine" evidence="8">
    <location>
        <position position="283"/>
    </location>
</feature>
<feature type="modified residue" description="Phosphoserine" evidence="8">
    <location>
        <position position="284"/>
    </location>
</feature>
<feature type="modified residue" description="Phosphoserine" evidence="2">
    <location>
        <position position="549"/>
    </location>
</feature>
<feature type="modified residue" description="Phosphoserine" evidence="2">
    <location>
        <position position="665"/>
    </location>
</feature>
<feature type="modified residue" description="Phosphoserine" evidence="8">
    <location>
        <position position="666"/>
    </location>
</feature>
<feature type="modified residue" description="Phosphoserine" evidence="7 8">
    <location>
        <position position="669"/>
    </location>
</feature>
<feature type="modified residue" description="Phosphothreonine" evidence="8">
    <location>
        <position position="676"/>
    </location>
</feature>
<feature type="modified residue" description="Phosphoserine" evidence="8">
    <location>
        <position position="680"/>
    </location>
</feature>
<feature type="modified residue" description="Phosphoserine" evidence="2">
    <location>
        <position position="688"/>
    </location>
</feature>
<feature type="sequence conflict" description="In Ref. 2; BAE28086." evidence="6" ref="2">
    <original>G</original>
    <variation>R</variation>
    <location>
        <position position="43"/>
    </location>
</feature>
<feature type="sequence conflict" description="In Ref. 2; BAE28086." evidence="6" ref="2">
    <original>K</original>
    <variation>R</variation>
    <location>
        <position position="52"/>
    </location>
</feature>
<feature type="sequence conflict" description="In Ref. 1; BAC98293." evidence="6" ref="1">
    <original>S</original>
    <variation>G</variation>
    <location>
        <position position="232"/>
    </location>
</feature>
<feature type="sequence conflict" description="In Ref. 1; BAC98293." evidence="6" ref="1">
    <original>G</original>
    <variation>D</variation>
    <location>
        <position position="249"/>
    </location>
</feature>
<gene>
    <name type="primary">Afap1</name>
    <name type="synonym">Kiaa3018</name>
</gene>
<organism>
    <name type="scientific">Mus musculus</name>
    <name type="common">Mouse</name>
    <dbReference type="NCBI Taxonomy" id="10090"/>
    <lineage>
        <taxon>Eukaryota</taxon>
        <taxon>Metazoa</taxon>
        <taxon>Chordata</taxon>
        <taxon>Craniata</taxon>
        <taxon>Vertebrata</taxon>
        <taxon>Euteleostomi</taxon>
        <taxon>Mammalia</taxon>
        <taxon>Eutheria</taxon>
        <taxon>Euarchontoglires</taxon>
        <taxon>Glires</taxon>
        <taxon>Rodentia</taxon>
        <taxon>Myomorpha</taxon>
        <taxon>Muroidea</taxon>
        <taxon>Muridae</taxon>
        <taxon>Murinae</taxon>
        <taxon>Mus</taxon>
        <taxon>Mus</taxon>
    </lineage>
</organism>
<keyword id="KW-0007">Acetylation</keyword>
<keyword id="KW-0009">Actin-binding</keyword>
<keyword id="KW-0175">Coiled coil</keyword>
<keyword id="KW-0963">Cytoplasm</keyword>
<keyword id="KW-0206">Cytoskeleton</keyword>
<keyword id="KW-0597">Phosphoprotein</keyword>
<keyword id="KW-1185">Reference proteome</keyword>
<keyword id="KW-0677">Repeat</keyword>
<keyword id="KW-0729">SH3-binding</keyword>
<comment type="function">
    <text evidence="1">Can cross-link actin filaments into both network and bundle structures. May modulate changes in actin filament integrity and induce lamellipodia formation. May function as an adapter molecule that links other proteins, such as SRC and PKC to the actin cytoskeleton (By similarity).</text>
</comment>
<comment type="subunit">
    <text evidence="1">Monomer and homomultimer. Interacts via its C-terminus with F-actin; probably involving AFAP1 multimers. Interacts with activated SRC SH3-SH2 domains. Interacts via its PH 1 domain with PRKCA, PRKCB and PRKCI (By similarity).</text>
</comment>
<comment type="subcellular location">
    <subcellularLocation>
        <location evidence="2">Cytoplasm</location>
        <location evidence="2">Cytoskeleton</location>
        <location evidence="2">Stress fiber</location>
    </subcellularLocation>
</comment>
<comment type="PTM">
    <text evidence="1">Phosphorylated on tyrosine residues by SRC.</text>
</comment>
<comment type="sequence caution" evidence="6">
    <conflict type="erroneous initiation">
        <sequence resource="EMBL-CDS" id="BAC98293"/>
    </conflict>
</comment>
<reference key="1">
    <citation type="journal article" date="2003" name="DNA Res.">
        <title>Prediction of the coding sequences of mouse homologues of KIAA gene: III. The complete nucleotide sequences of 500 mouse KIAA-homologous cDNAs identified by screening of terminal sequences of cDNA clones randomly sampled from size-fractionated libraries.</title>
        <authorList>
            <person name="Okazaki N."/>
            <person name="Kikuno R."/>
            <person name="Ohara R."/>
            <person name="Inamoto S."/>
            <person name="Koseki H."/>
            <person name="Hiraoka S."/>
            <person name="Saga Y."/>
            <person name="Nagase T."/>
            <person name="Ohara O."/>
            <person name="Koga H."/>
        </authorList>
    </citation>
    <scope>NUCLEOTIDE SEQUENCE [LARGE SCALE MRNA]</scope>
    <source>
        <tissue>Brain</tissue>
    </source>
</reference>
<reference key="2">
    <citation type="journal article" date="2005" name="Science">
        <title>The transcriptional landscape of the mammalian genome.</title>
        <authorList>
            <person name="Carninci P."/>
            <person name="Kasukawa T."/>
            <person name="Katayama S."/>
            <person name="Gough J."/>
            <person name="Frith M.C."/>
            <person name="Maeda N."/>
            <person name="Oyama R."/>
            <person name="Ravasi T."/>
            <person name="Lenhard B."/>
            <person name="Wells C."/>
            <person name="Kodzius R."/>
            <person name="Shimokawa K."/>
            <person name="Bajic V.B."/>
            <person name="Brenner S.E."/>
            <person name="Batalov S."/>
            <person name="Forrest A.R."/>
            <person name="Zavolan M."/>
            <person name="Davis M.J."/>
            <person name="Wilming L.G."/>
            <person name="Aidinis V."/>
            <person name="Allen J.E."/>
            <person name="Ambesi-Impiombato A."/>
            <person name="Apweiler R."/>
            <person name="Aturaliya R.N."/>
            <person name="Bailey T.L."/>
            <person name="Bansal M."/>
            <person name="Baxter L."/>
            <person name="Beisel K.W."/>
            <person name="Bersano T."/>
            <person name="Bono H."/>
            <person name="Chalk A.M."/>
            <person name="Chiu K.P."/>
            <person name="Choudhary V."/>
            <person name="Christoffels A."/>
            <person name="Clutterbuck D.R."/>
            <person name="Crowe M.L."/>
            <person name="Dalla E."/>
            <person name="Dalrymple B.P."/>
            <person name="de Bono B."/>
            <person name="Della Gatta G."/>
            <person name="di Bernardo D."/>
            <person name="Down T."/>
            <person name="Engstrom P."/>
            <person name="Fagiolini M."/>
            <person name="Faulkner G."/>
            <person name="Fletcher C.F."/>
            <person name="Fukushima T."/>
            <person name="Furuno M."/>
            <person name="Futaki S."/>
            <person name="Gariboldi M."/>
            <person name="Georgii-Hemming P."/>
            <person name="Gingeras T.R."/>
            <person name="Gojobori T."/>
            <person name="Green R.E."/>
            <person name="Gustincich S."/>
            <person name="Harbers M."/>
            <person name="Hayashi Y."/>
            <person name="Hensch T.K."/>
            <person name="Hirokawa N."/>
            <person name="Hill D."/>
            <person name="Huminiecki L."/>
            <person name="Iacono M."/>
            <person name="Ikeo K."/>
            <person name="Iwama A."/>
            <person name="Ishikawa T."/>
            <person name="Jakt M."/>
            <person name="Kanapin A."/>
            <person name="Katoh M."/>
            <person name="Kawasawa Y."/>
            <person name="Kelso J."/>
            <person name="Kitamura H."/>
            <person name="Kitano H."/>
            <person name="Kollias G."/>
            <person name="Krishnan S.P."/>
            <person name="Kruger A."/>
            <person name="Kummerfeld S.K."/>
            <person name="Kurochkin I.V."/>
            <person name="Lareau L.F."/>
            <person name="Lazarevic D."/>
            <person name="Lipovich L."/>
            <person name="Liu J."/>
            <person name="Liuni S."/>
            <person name="McWilliam S."/>
            <person name="Madan Babu M."/>
            <person name="Madera M."/>
            <person name="Marchionni L."/>
            <person name="Matsuda H."/>
            <person name="Matsuzawa S."/>
            <person name="Miki H."/>
            <person name="Mignone F."/>
            <person name="Miyake S."/>
            <person name="Morris K."/>
            <person name="Mottagui-Tabar S."/>
            <person name="Mulder N."/>
            <person name="Nakano N."/>
            <person name="Nakauchi H."/>
            <person name="Ng P."/>
            <person name="Nilsson R."/>
            <person name="Nishiguchi S."/>
            <person name="Nishikawa S."/>
            <person name="Nori F."/>
            <person name="Ohara O."/>
            <person name="Okazaki Y."/>
            <person name="Orlando V."/>
            <person name="Pang K.C."/>
            <person name="Pavan W.J."/>
            <person name="Pavesi G."/>
            <person name="Pesole G."/>
            <person name="Petrovsky N."/>
            <person name="Piazza S."/>
            <person name="Reed J."/>
            <person name="Reid J.F."/>
            <person name="Ring B.Z."/>
            <person name="Ringwald M."/>
            <person name="Rost B."/>
            <person name="Ruan Y."/>
            <person name="Salzberg S.L."/>
            <person name="Sandelin A."/>
            <person name="Schneider C."/>
            <person name="Schoenbach C."/>
            <person name="Sekiguchi K."/>
            <person name="Semple C.A."/>
            <person name="Seno S."/>
            <person name="Sessa L."/>
            <person name="Sheng Y."/>
            <person name="Shibata Y."/>
            <person name="Shimada H."/>
            <person name="Shimada K."/>
            <person name="Silva D."/>
            <person name="Sinclair B."/>
            <person name="Sperling S."/>
            <person name="Stupka E."/>
            <person name="Sugiura K."/>
            <person name="Sultana R."/>
            <person name="Takenaka Y."/>
            <person name="Taki K."/>
            <person name="Tammoja K."/>
            <person name="Tan S.L."/>
            <person name="Tang S."/>
            <person name="Taylor M.S."/>
            <person name="Tegner J."/>
            <person name="Teichmann S.A."/>
            <person name="Ueda H.R."/>
            <person name="van Nimwegen E."/>
            <person name="Verardo R."/>
            <person name="Wei C.L."/>
            <person name="Yagi K."/>
            <person name="Yamanishi H."/>
            <person name="Zabarovsky E."/>
            <person name="Zhu S."/>
            <person name="Zimmer A."/>
            <person name="Hide W."/>
            <person name="Bult C."/>
            <person name="Grimmond S.M."/>
            <person name="Teasdale R.D."/>
            <person name="Liu E.T."/>
            <person name="Brusic V."/>
            <person name="Quackenbush J."/>
            <person name="Wahlestedt C."/>
            <person name="Mattick J.S."/>
            <person name="Hume D.A."/>
            <person name="Kai C."/>
            <person name="Sasaki D."/>
            <person name="Tomaru Y."/>
            <person name="Fukuda S."/>
            <person name="Kanamori-Katayama M."/>
            <person name="Suzuki M."/>
            <person name="Aoki J."/>
            <person name="Arakawa T."/>
            <person name="Iida J."/>
            <person name="Imamura K."/>
            <person name="Itoh M."/>
            <person name="Kato T."/>
            <person name="Kawaji H."/>
            <person name="Kawagashira N."/>
            <person name="Kawashima T."/>
            <person name="Kojima M."/>
            <person name="Kondo S."/>
            <person name="Konno H."/>
            <person name="Nakano K."/>
            <person name="Ninomiya N."/>
            <person name="Nishio T."/>
            <person name="Okada M."/>
            <person name="Plessy C."/>
            <person name="Shibata K."/>
            <person name="Shiraki T."/>
            <person name="Suzuki S."/>
            <person name="Tagami M."/>
            <person name="Waki K."/>
            <person name="Watahiki A."/>
            <person name="Okamura-Oho Y."/>
            <person name="Suzuki H."/>
            <person name="Kawai J."/>
            <person name="Hayashizaki Y."/>
        </authorList>
    </citation>
    <scope>NUCLEOTIDE SEQUENCE [LARGE SCALE MRNA]</scope>
    <source>
        <strain>C57BL/6J</strain>
        <tissue>Melanocyte</tissue>
        <tissue>Placenta</tissue>
        <tissue>Testis</tissue>
    </source>
</reference>
<reference key="3">
    <citation type="journal article" date="2004" name="Genome Res.">
        <title>The status, quality, and expansion of the NIH full-length cDNA project: the Mammalian Gene Collection (MGC).</title>
        <authorList>
            <consortium name="The MGC Project Team"/>
        </authorList>
    </citation>
    <scope>NUCLEOTIDE SEQUENCE [LARGE SCALE MRNA]</scope>
    <source>
        <tissue>Testis</tissue>
    </source>
</reference>
<reference key="4">
    <citation type="journal article" date="2007" name="Proc. Natl. Acad. Sci. U.S.A.">
        <title>Large-scale phosphorylation analysis of mouse liver.</title>
        <authorList>
            <person name="Villen J."/>
            <person name="Beausoleil S.A."/>
            <person name="Gerber S.A."/>
            <person name="Gygi S.P."/>
        </authorList>
    </citation>
    <scope>PHOSPHORYLATION [LARGE SCALE ANALYSIS] AT SER-669</scope>
    <scope>IDENTIFICATION BY MASS SPECTROMETRY [LARGE SCALE ANALYSIS]</scope>
    <source>
        <tissue>Liver</tissue>
    </source>
</reference>
<reference key="5">
    <citation type="journal article" date="2010" name="Cell">
        <title>A tissue-specific atlas of mouse protein phosphorylation and expression.</title>
        <authorList>
            <person name="Huttlin E.L."/>
            <person name="Jedrychowski M.P."/>
            <person name="Elias J.E."/>
            <person name="Goswami T."/>
            <person name="Rad R."/>
            <person name="Beausoleil S.A."/>
            <person name="Villen J."/>
            <person name="Haas W."/>
            <person name="Sowa M.E."/>
            <person name="Gygi S.P."/>
        </authorList>
    </citation>
    <scope>PHOSPHORYLATION [LARGE SCALE ANALYSIS] AT SER-283; SER-284; SER-666; SER-669; THR-676 AND SER-680</scope>
    <scope>IDENTIFICATION BY MASS SPECTROMETRY [LARGE SCALE ANALYSIS]</scope>
    <source>
        <tissue>Brain</tissue>
        <tissue>Brown adipose tissue</tissue>
        <tissue>Kidney</tissue>
        <tissue>Lung</tissue>
        <tissue>Pancreas</tissue>
        <tissue>Spleen</tissue>
        <tissue>Testis</tissue>
    </source>
</reference>
<accession>Q80YS6</accession>
<accession>Q3UGX1</accession>
<accession>Q6ZPE4</accession>